<keyword id="KW-0240">DNA-directed RNA polymerase</keyword>
<keyword id="KW-0548">Nucleotidyltransferase</keyword>
<keyword id="KW-1185">Reference proteome</keyword>
<keyword id="KW-0804">Transcription</keyword>
<keyword id="KW-0808">Transferase</keyword>
<proteinExistence type="inferred from homology"/>
<evidence type="ECO:0000255" key="1">
    <source>
        <dbReference type="HAMAP-Rule" id="MF_00059"/>
    </source>
</evidence>
<dbReference type="EC" id="2.7.7.6" evidence="1"/>
<dbReference type="EMBL" id="CP000509">
    <property type="protein sequence ID" value="ABL83373.1"/>
    <property type="molecule type" value="Genomic_DNA"/>
</dbReference>
<dbReference type="RefSeq" id="WP_011757304.1">
    <property type="nucleotide sequence ID" value="NC_008699.1"/>
</dbReference>
<dbReference type="SMR" id="A1SNI8"/>
<dbReference type="STRING" id="196162.Noca_3875"/>
<dbReference type="KEGG" id="nca:Noca_3875"/>
<dbReference type="eggNOG" id="COG0202">
    <property type="taxonomic scope" value="Bacteria"/>
</dbReference>
<dbReference type="HOGENOM" id="CLU_053084_0_1_11"/>
<dbReference type="OrthoDB" id="9805706at2"/>
<dbReference type="Proteomes" id="UP000000640">
    <property type="component" value="Chromosome"/>
</dbReference>
<dbReference type="GO" id="GO:0005737">
    <property type="term" value="C:cytoplasm"/>
    <property type="evidence" value="ECO:0007669"/>
    <property type="project" value="UniProtKB-ARBA"/>
</dbReference>
<dbReference type="GO" id="GO:0000428">
    <property type="term" value="C:DNA-directed RNA polymerase complex"/>
    <property type="evidence" value="ECO:0007669"/>
    <property type="project" value="UniProtKB-KW"/>
</dbReference>
<dbReference type="GO" id="GO:0003677">
    <property type="term" value="F:DNA binding"/>
    <property type="evidence" value="ECO:0007669"/>
    <property type="project" value="UniProtKB-UniRule"/>
</dbReference>
<dbReference type="GO" id="GO:0003899">
    <property type="term" value="F:DNA-directed RNA polymerase activity"/>
    <property type="evidence" value="ECO:0007669"/>
    <property type="project" value="UniProtKB-UniRule"/>
</dbReference>
<dbReference type="GO" id="GO:0046983">
    <property type="term" value="F:protein dimerization activity"/>
    <property type="evidence" value="ECO:0007669"/>
    <property type="project" value="InterPro"/>
</dbReference>
<dbReference type="GO" id="GO:0006351">
    <property type="term" value="P:DNA-templated transcription"/>
    <property type="evidence" value="ECO:0007669"/>
    <property type="project" value="UniProtKB-UniRule"/>
</dbReference>
<dbReference type="CDD" id="cd06928">
    <property type="entry name" value="RNAP_alpha_NTD"/>
    <property type="match status" value="1"/>
</dbReference>
<dbReference type="FunFam" id="1.10.150.20:FF:000001">
    <property type="entry name" value="DNA-directed RNA polymerase subunit alpha"/>
    <property type="match status" value="1"/>
</dbReference>
<dbReference type="FunFam" id="2.170.120.12:FF:000001">
    <property type="entry name" value="DNA-directed RNA polymerase subunit alpha"/>
    <property type="match status" value="1"/>
</dbReference>
<dbReference type="Gene3D" id="1.10.150.20">
    <property type="entry name" value="5' to 3' exonuclease, C-terminal subdomain"/>
    <property type="match status" value="1"/>
</dbReference>
<dbReference type="Gene3D" id="2.170.120.12">
    <property type="entry name" value="DNA-directed RNA polymerase, insert domain"/>
    <property type="match status" value="1"/>
</dbReference>
<dbReference type="Gene3D" id="3.30.1360.10">
    <property type="entry name" value="RNA polymerase, RBP11-like subunit"/>
    <property type="match status" value="1"/>
</dbReference>
<dbReference type="HAMAP" id="MF_00059">
    <property type="entry name" value="RNApol_bact_RpoA"/>
    <property type="match status" value="1"/>
</dbReference>
<dbReference type="InterPro" id="IPR011262">
    <property type="entry name" value="DNA-dir_RNA_pol_insert"/>
</dbReference>
<dbReference type="InterPro" id="IPR011263">
    <property type="entry name" value="DNA-dir_RNA_pol_RpoA/D/Rpb3"/>
</dbReference>
<dbReference type="InterPro" id="IPR011773">
    <property type="entry name" value="DNA-dir_RpoA"/>
</dbReference>
<dbReference type="InterPro" id="IPR036603">
    <property type="entry name" value="RBP11-like"/>
</dbReference>
<dbReference type="InterPro" id="IPR011260">
    <property type="entry name" value="RNAP_asu_C"/>
</dbReference>
<dbReference type="InterPro" id="IPR036643">
    <property type="entry name" value="RNApol_insert_sf"/>
</dbReference>
<dbReference type="NCBIfam" id="NF003513">
    <property type="entry name" value="PRK05182.1-2"/>
    <property type="match status" value="1"/>
</dbReference>
<dbReference type="NCBIfam" id="NF003514">
    <property type="entry name" value="PRK05182.1-4"/>
    <property type="match status" value="1"/>
</dbReference>
<dbReference type="NCBIfam" id="NF003519">
    <property type="entry name" value="PRK05182.2-5"/>
    <property type="match status" value="1"/>
</dbReference>
<dbReference type="NCBIfam" id="TIGR02027">
    <property type="entry name" value="rpoA"/>
    <property type="match status" value="1"/>
</dbReference>
<dbReference type="Pfam" id="PF01000">
    <property type="entry name" value="RNA_pol_A_bac"/>
    <property type="match status" value="1"/>
</dbReference>
<dbReference type="Pfam" id="PF03118">
    <property type="entry name" value="RNA_pol_A_CTD"/>
    <property type="match status" value="1"/>
</dbReference>
<dbReference type="Pfam" id="PF01193">
    <property type="entry name" value="RNA_pol_L"/>
    <property type="match status" value="1"/>
</dbReference>
<dbReference type="SMART" id="SM00662">
    <property type="entry name" value="RPOLD"/>
    <property type="match status" value="1"/>
</dbReference>
<dbReference type="SUPFAM" id="SSF47789">
    <property type="entry name" value="C-terminal domain of RNA polymerase alpha subunit"/>
    <property type="match status" value="1"/>
</dbReference>
<dbReference type="SUPFAM" id="SSF56553">
    <property type="entry name" value="Insert subdomain of RNA polymerase alpha subunit"/>
    <property type="match status" value="1"/>
</dbReference>
<dbReference type="SUPFAM" id="SSF55257">
    <property type="entry name" value="RBP11-like subunits of RNA polymerase"/>
    <property type="match status" value="1"/>
</dbReference>
<organism>
    <name type="scientific">Nocardioides sp. (strain ATCC BAA-499 / JS614)</name>
    <dbReference type="NCBI Taxonomy" id="196162"/>
    <lineage>
        <taxon>Bacteria</taxon>
        <taxon>Bacillati</taxon>
        <taxon>Actinomycetota</taxon>
        <taxon>Actinomycetes</taxon>
        <taxon>Propionibacteriales</taxon>
        <taxon>Nocardioidaceae</taxon>
        <taxon>Nocardioides</taxon>
    </lineage>
</organism>
<protein>
    <recommendedName>
        <fullName evidence="1">DNA-directed RNA polymerase subunit alpha</fullName>
        <shortName evidence="1">RNAP subunit alpha</shortName>
        <ecNumber evidence="1">2.7.7.6</ecNumber>
    </recommendedName>
    <alternativeName>
        <fullName evidence="1">RNA polymerase subunit alpha</fullName>
    </alternativeName>
    <alternativeName>
        <fullName evidence="1">Transcriptase subunit alpha</fullName>
    </alternativeName>
</protein>
<name>RPOA_NOCSJ</name>
<gene>
    <name evidence="1" type="primary">rpoA</name>
    <name type="ordered locus">Noca_3875</name>
</gene>
<sequence>MLIAQRPTLSEETVDEFRSRFVIEPLEPGFGYTLGNSLRRTLLSSIPGASVTSIKIDNVLHEFSTIEGVKEDVTEVILNLKGLVVSSEHDEPVTMYLRKSGAGDVTAADIAPPAGVEVHNPDLKIATLSDKGKLEMELVVERGRGYVSAVQNKGADNEIGRMPVDSIYSPVLKVTYKVEATRVEQRTDFDKLVIDVETKPSIRPRDAIASAGKTLVELFGLARELNVEAEGIDIGPSPVDEQLAADLALPVEDLQLTVRSYNCLKREGIHTVGELISRSEQDLLDIRNFGAKSIDEVKAKLVEMGLSLKDSAPGFDPHAALAAYGDDDDDAFVEDEQY</sequence>
<feature type="chain" id="PRO_0000296843" description="DNA-directed RNA polymerase subunit alpha">
    <location>
        <begin position="1"/>
        <end position="338"/>
    </location>
</feature>
<feature type="region of interest" description="Alpha N-terminal domain (alpha-NTD)" evidence="1">
    <location>
        <begin position="1"/>
        <end position="226"/>
    </location>
</feature>
<feature type="region of interest" description="Alpha C-terminal domain (alpha-CTD)" evidence="1">
    <location>
        <begin position="240"/>
        <end position="338"/>
    </location>
</feature>
<reference key="1">
    <citation type="submission" date="2006-12" db="EMBL/GenBank/DDBJ databases">
        <title>Complete sequence of chromosome 1 of Nocardioides sp. JS614.</title>
        <authorList>
            <person name="Copeland A."/>
            <person name="Lucas S."/>
            <person name="Lapidus A."/>
            <person name="Barry K."/>
            <person name="Detter J.C."/>
            <person name="Glavina del Rio T."/>
            <person name="Hammon N."/>
            <person name="Israni S."/>
            <person name="Dalin E."/>
            <person name="Tice H."/>
            <person name="Pitluck S."/>
            <person name="Thompson L.S."/>
            <person name="Brettin T."/>
            <person name="Bruce D."/>
            <person name="Han C."/>
            <person name="Tapia R."/>
            <person name="Schmutz J."/>
            <person name="Larimer F."/>
            <person name="Land M."/>
            <person name="Hauser L."/>
            <person name="Kyrpides N."/>
            <person name="Kim E."/>
            <person name="Mattes T."/>
            <person name="Gossett J."/>
            <person name="Richardson P."/>
        </authorList>
    </citation>
    <scope>NUCLEOTIDE SEQUENCE [LARGE SCALE GENOMIC DNA]</scope>
    <source>
        <strain>ATCC BAA-499 / JS614</strain>
    </source>
</reference>
<accession>A1SNI8</accession>
<comment type="function">
    <text evidence="1">DNA-dependent RNA polymerase catalyzes the transcription of DNA into RNA using the four ribonucleoside triphosphates as substrates.</text>
</comment>
<comment type="catalytic activity">
    <reaction evidence="1">
        <text>RNA(n) + a ribonucleoside 5'-triphosphate = RNA(n+1) + diphosphate</text>
        <dbReference type="Rhea" id="RHEA:21248"/>
        <dbReference type="Rhea" id="RHEA-COMP:14527"/>
        <dbReference type="Rhea" id="RHEA-COMP:17342"/>
        <dbReference type="ChEBI" id="CHEBI:33019"/>
        <dbReference type="ChEBI" id="CHEBI:61557"/>
        <dbReference type="ChEBI" id="CHEBI:140395"/>
        <dbReference type="EC" id="2.7.7.6"/>
    </reaction>
</comment>
<comment type="subunit">
    <text evidence="1">Homodimer. The RNAP catalytic core consists of 2 alpha, 1 beta, 1 beta' and 1 omega subunit. When a sigma factor is associated with the core the holoenzyme is formed, which can initiate transcription.</text>
</comment>
<comment type="domain">
    <text evidence="1">The N-terminal domain is essential for RNAP assembly and basal transcription, whereas the C-terminal domain is involved in interaction with transcriptional regulators and with upstream promoter elements.</text>
</comment>
<comment type="similarity">
    <text evidence="1">Belongs to the RNA polymerase alpha chain family.</text>
</comment>